<comment type="function">
    <text evidence="1">Cytochrome c oxidase is the component of the respiratory chain that catalyzes the reduction of oxygen to water. Subunits 1-3 form the functional core of the enzyme complex. CO I is the catalytic subunit of the enzyme. Electrons originating in cytochrome c are transferred via the copper A center of subunit 2 and heme A of subunit 1 to the bimetallic center formed by heme A3 and copper B (By similarity).</text>
</comment>
<comment type="catalytic activity">
    <reaction>
        <text>4 Fe(II)-[cytochrome c] + O2 + 8 H(+)(in) = 4 Fe(III)-[cytochrome c] + 2 H2O + 4 H(+)(out)</text>
        <dbReference type="Rhea" id="RHEA:11436"/>
        <dbReference type="Rhea" id="RHEA-COMP:10350"/>
        <dbReference type="Rhea" id="RHEA-COMP:14399"/>
        <dbReference type="ChEBI" id="CHEBI:15377"/>
        <dbReference type="ChEBI" id="CHEBI:15378"/>
        <dbReference type="ChEBI" id="CHEBI:15379"/>
        <dbReference type="ChEBI" id="CHEBI:29033"/>
        <dbReference type="ChEBI" id="CHEBI:29034"/>
        <dbReference type="EC" id="7.1.1.9"/>
    </reaction>
</comment>
<comment type="cofactor">
    <cofactor evidence="1">
        <name>Cu(2+)</name>
        <dbReference type="ChEBI" id="CHEBI:29036"/>
    </cofactor>
    <text evidence="1">Binds 1 copper B ion per subunit.</text>
</comment>
<comment type="cofactor">
    <cofactor evidence="1">
        <name>heme</name>
        <dbReference type="ChEBI" id="CHEBI:30413"/>
    </cofactor>
    <text evidence="1">Binds 2 heme groups per subunit.</text>
</comment>
<comment type="pathway">
    <text>Energy metabolism; oxidative phosphorylation.</text>
</comment>
<comment type="subunit">
    <text evidence="1">Associates with subunits II, III and IV to form cytochrome c oxidase.</text>
</comment>
<comment type="subcellular location">
    <subcellularLocation>
        <location evidence="1">Cell membrane</location>
        <topology evidence="1">Multi-pass membrane protein</topology>
    </subcellularLocation>
</comment>
<comment type="similarity">
    <text evidence="3">Belongs to the heme-copper respiratory oxidase family.</text>
</comment>
<reference key="1">
    <citation type="journal article" date="2001" name="Nature">
        <title>Massive gene decay in the leprosy bacillus.</title>
        <authorList>
            <person name="Cole S.T."/>
            <person name="Eiglmeier K."/>
            <person name="Parkhill J."/>
            <person name="James K.D."/>
            <person name="Thomson N.R."/>
            <person name="Wheeler P.R."/>
            <person name="Honore N."/>
            <person name="Garnier T."/>
            <person name="Churcher C.M."/>
            <person name="Harris D.E."/>
            <person name="Mungall K.L."/>
            <person name="Basham D."/>
            <person name="Brown D."/>
            <person name="Chillingworth T."/>
            <person name="Connor R."/>
            <person name="Davies R.M."/>
            <person name="Devlin K."/>
            <person name="Duthoy S."/>
            <person name="Feltwell T."/>
            <person name="Fraser A."/>
            <person name="Hamlin N."/>
            <person name="Holroyd S."/>
            <person name="Hornsby T."/>
            <person name="Jagels K."/>
            <person name="Lacroix C."/>
            <person name="Maclean J."/>
            <person name="Moule S."/>
            <person name="Murphy L.D."/>
            <person name="Oliver K."/>
            <person name="Quail M.A."/>
            <person name="Rajandream M.A."/>
            <person name="Rutherford K.M."/>
            <person name="Rutter S."/>
            <person name="Seeger K."/>
            <person name="Simon S."/>
            <person name="Simmonds M."/>
            <person name="Skelton J."/>
            <person name="Squares R."/>
            <person name="Squares S."/>
            <person name="Stevens K."/>
            <person name="Taylor K."/>
            <person name="Whitehead S."/>
            <person name="Woodward J.R."/>
            <person name="Barrell B.G."/>
        </authorList>
    </citation>
    <scope>NUCLEOTIDE SEQUENCE [LARGE SCALE GENOMIC DNA]</scope>
    <source>
        <strain>TN</strain>
    </source>
</reference>
<protein>
    <recommendedName>
        <fullName>Probable cytochrome c oxidase subunit 1</fullName>
        <ecNumber>7.1.1.9</ecNumber>
    </recommendedName>
    <alternativeName>
        <fullName>Cytochrome aa3 subunit 1</fullName>
    </alternativeName>
    <alternativeName>
        <fullName>Cytochrome c oxidase polypeptide I</fullName>
    </alternativeName>
</protein>
<proteinExistence type="inferred from homology"/>
<sequence length="574" mass="63957">MTAEALSSGELKAIRPYPARTGPKGNLVYKLITTTDHKMIGIMYCVACFIFFFVGGLLALLMRTELAAPGLQFLSNEQFNQLFTMHGTIMLLFYATPIVFGFANLVLPLQIGAPDVAFPRLNAFSFWLFLFGAAIGMAGFITPGGAADFGWTAYTPLTDAIHSPGVGGDLWIMGLIVAGLGTILGAVNMITTVVCLRAPGMTMFRMPIFTWNILVTSILVLIAFPLLTAALFGLAADRHLGAHIYDAANGGVLLWQHLFWFFGHPEVYIIALPFFGIVSEIFPVFSRKPIFGYTTLVYATLSIAALSVAVWAHHMFATGAVLLPFFSFMTYLIAVPTGIKFFNWVGTMWKGQLTFETPMLFSVGFAVTFLLGGLTGVLLASPPLDFHVTDSYFVVAHFHYVLFGTIVFSTFAGIYFWFPKMTGRLLDEQLGKLHFWLTFIGFHTTFLVQHWLGDMGMPRRYADYLPTDGFQGLNVVSTIGSFILGASMFPFVWNVFKSWRYGEVVTVDDPWGYGNSLEWATSCPPPRHNFTELPRIRSERPAFELHYPHMVERLRDEAYVGRRHAEELVEVSLH</sequence>
<evidence type="ECO:0000250" key="1"/>
<evidence type="ECO:0000255" key="2"/>
<evidence type="ECO:0000305" key="3"/>
<feature type="chain" id="PRO_0000183441" description="Probable cytochrome c oxidase subunit 1">
    <location>
        <begin position="1"/>
        <end position="574"/>
    </location>
</feature>
<feature type="transmembrane region" description="Helical" evidence="2">
    <location>
        <begin position="40"/>
        <end position="60"/>
    </location>
</feature>
<feature type="transmembrane region" description="Helical" evidence="2">
    <location>
        <begin position="89"/>
        <end position="109"/>
    </location>
</feature>
<feature type="transmembrane region" description="Helical" evidence="2">
    <location>
        <begin position="121"/>
        <end position="141"/>
    </location>
</feature>
<feature type="transmembrane region" description="Helical" evidence="2">
    <location>
        <begin position="170"/>
        <end position="190"/>
    </location>
</feature>
<feature type="transmembrane region" description="Helical" evidence="2">
    <location>
        <begin position="213"/>
        <end position="233"/>
    </location>
</feature>
<feature type="transmembrane region" description="Helical" evidence="2">
    <location>
        <begin position="258"/>
        <end position="278"/>
    </location>
</feature>
<feature type="transmembrane region" description="Helical" evidence="2">
    <location>
        <begin position="290"/>
        <end position="310"/>
    </location>
</feature>
<feature type="transmembrane region" description="Helical" evidence="2">
    <location>
        <begin position="315"/>
        <end position="335"/>
    </location>
</feature>
<feature type="transmembrane region" description="Helical" evidence="2">
    <location>
        <begin position="359"/>
        <end position="379"/>
    </location>
</feature>
<feature type="transmembrane region" description="Helical" evidence="2">
    <location>
        <begin position="398"/>
        <end position="418"/>
    </location>
</feature>
<feature type="transmembrane region" description="Helical" evidence="2">
    <location>
        <begin position="433"/>
        <end position="453"/>
    </location>
</feature>
<feature type="transmembrane region" description="Helical" evidence="2">
    <location>
        <begin position="476"/>
        <end position="496"/>
    </location>
</feature>
<feature type="binding site" description="axial binding residue" evidence="1">
    <location>
        <position position="86"/>
    </location>
    <ligand>
        <name>Fe(II)-heme a</name>
        <dbReference type="ChEBI" id="CHEBI:61715"/>
    </ligand>
    <ligandPart>
        <name>Fe</name>
        <dbReference type="ChEBI" id="CHEBI:18248"/>
    </ligandPart>
</feature>
<feature type="binding site" evidence="1">
    <location>
        <position position="264"/>
    </location>
    <ligand>
        <name>Cu cation</name>
        <dbReference type="ChEBI" id="CHEBI:23378"/>
        <label>B</label>
    </ligand>
</feature>
<feature type="binding site" evidence="1">
    <location>
        <position position="268"/>
    </location>
    <ligand>
        <name>Cu cation</name>
        <dbReference type="ChEBI" id="CHEBI:23378"/>
        <label>B</label>
    </ligand>
</feature>
<feature type="binding site" evidence="1">
    <location>
        <position position="313"/>
    </location>
    <ligand>
        <name>Cu cation</name>
        <dbReference type="ChEBI" id="CHEBI:23378"/>
        <label>B</label>
    </ligand>
</feature>
<feature type="binding site" evidence="1">
    <location>
        <position position="314"/>
    </location>
    <ligand>
        <name>Cu cation</name>
        <dbReference type="ChEBI" id="CHEBI:23378"/>
        <label>B</label>
    </ligand>
</feature>
<feature type="binding site" description="axial binding residue" evidence="1">
    <location>
        <position position="397"/>
    </location>
    <ligand>
        <name>heme a3</name>
        <dbReference type="ChEBI" id="CHEBI:83282"/>
    </ligand>
    <ligandPart>
        <name>Fe</name>
        <dbReference type="ChEBI" id="CHEBI:18248"/>
    </ligandPart>
</feature>
<feature type="binding site" description="axial binding residue" evidence="1">
    <location>
        <position position="399"/>
    </location>
    <ligand>
        <name>Fe(II)-heme a</name>
        <dbReference type="ChEBI" id="CHEBI:61715"/>
    </ligand>
    <ligandPart>
        <name>Fe</name>
        <dbReference type="ChEBI" id="CHEBI:18248"/>
    </ligandPart>
</feature>
<feature type="cross-link" description="1'-histidyl-3'-tyrosine (His-Tyr)" evidence="1">
    <location>
        <begin position="264"/>
        <end position="268"/>
    </location>
</feature>
<keyword id="KW-1003">Cell membrane</keyword>
<keyword id="KW-0186">Copper</keyword>
<keyword id="KW-0249">Electron transport</keyword>
<keyword id="KW-0349">Heme</keyword>
<keyword id="KW-0408">Iron</keyword>
<keyword id="KW-0472">Membrane</keyword>
<keyword id="KW-0479">Metal-binding</keyword>
<keyword id="KW-1185">Reference proteome</keyword>
<keyword id="KW-0679">Respiratory chain</keyword>
<keyword id="KW-1278">Translocase</keyword>
<keyword id="KW-0812">Transmembrane</keyword>
<keyword id="KW-1133">Transmembrane helix</keyword>
<keyword id="KW-0813">Transport</keyword>
<dbReference type="EC" id="7.1.1.9"/>
<dbReference type="EMBL" id="AL583923">
    <property type="protein sequence ID" value="CAC30681.1"/>
    <property type="molecule type" value="Genomic_DNA"/>
</dbReference>
<dbReference type="PIR" id="B87125">
    <property type="entry name" value="B87125"/>
</dbReference>
<dbReference type="RefSeq" id="NP_302190.1">
    <property type="nucleotide sequence ID" value="NC_002677.1"/>
</dbReference>
<dbReference type="RefSeq" id="WP_010908511.1">
    <property type="nucleotide sequence ID" value="NC_002677.1"/>
</dbReference>
<dbReference type="SMR" id="Q9CBQ5"/>
<dbReference type="STRING" id="272631.gene:17575573"/>
<dbReference type="KEGG" id="mle:ML1728"/>
<dbReference type="PATRIC" id="fig|272631.5.peg.3251"/>
<dbReference type="Leproma" id="ML1728"/>
<dbReference type="eggNOG" id="COG0843">
    <property type="taxonomic scope" value="Bacteria"/>
</dbReference>
<dbReference type="HOGENOM" id="CLU_011899_7_3_11"/>
<dbReference type="OrthoDB" id="9803294at2"/>
<dbReference type="UniPathway" id="UPA00705"/>
<dbReference type="Proteomes" id="UP000000806">
    <property type="component" value="Chromosome"/>
</dbReference>
<dbReference type="GO" id="GO:0005886">
    <property type="term" value="C:plasma membrane"/>
    <property type="evidence" value="ECO:0007669"/>
    <property type="project" value="UniProtKB-SubCell"/>
</dbReference>
<dbReference type="GO" id="GO:0004129">
    <property type="term" value="F:cytochrome-c oxidase activity"/>
    <property type="evidence" value="ECO:0007669"/>
    <property type="project" value="UniProtKB-EC"/>
</dbReference>
<dbReference type="GO" id="GO:0020037">
    <property type="term" value="F:heme binding"/>
    <property type="evidence" value="ECO:0007669"/>
    <property type="project" value="InterPro"/>
</dbReference>
<dbReference type="GO" id="GO:0046872">
    <property type="term" value="F:metal ion binding"/>
    <property type="evidence" value="ECO:0007669"/>
    <property type="project" value="UniProtKB-KW"/>
</dbReference>
<dbReference type="GO" id="GO:0015990">
    <property type="term" value="P:electron transport coupled proton transport"/>
    <property type="evidence" value="ECO:0007669"/>
    <property type="project" value="InterPro"/>
</dbReference>
<dbReference type="GO" id="GO:0006119">
    <property type="term" value="P:oxidative phosphorylation"/>
    <property type="evidence" value="ECO:0007669"/>
    <property type="project" value="UniProtKB-UniPathway"/>
</dbReference>
<dbReference type="GO" id="GO:0022904">
    <property type="term" value="P:respiratory electron transport chain"/>
    <property type="evidence" value="ECO:0007669"/>
    <property type="project" value="TreeGrafter"/>
</dbReference>
<dbReference type="CDD" id="cd01662">
    <property type="entry name" value="Ubiquinol_Oxidase_I"/>
    <property type="match status" value="1"/>
</dbReference>
<dbReference type="FunFam" id="1.20.210.10:FF:000003">
    <property type="entry name" value="Cytochrome c oxidase subunit 1"/>
    <property type="match status" value="1"/>
</dbReference>
<dbReference type="Gene3D" id="1.20.210.10">
    <property type="entry name" value="Cytochrome c oxidase-like, subunit I domain"/>
    <property type="match status" value="1"/>
</dbReference>
<dbReference type="InterPro" id="IPR023616">
    <property type="entry name" value="Cyt_c_oxase-like_su1_dom"/>
</dbReference>
<dbReference type="InterPro" id="IPR036927">
    <property type="entry name" value="Cyt_c_oxase-like_su1_sf"/>
</dbReference>
<dbReference type="InterPro" id="IPR000883">
    <property type="entry name" value="Cyt_C_Oxase_1"/>
</dbReference>
<dbReference type="InterPro" id="IPR023615">
    <property type="entry name" value="Cyt_c_Oxase_su1_BS"/>
</dbReference>
<dbReference type="InterPro" id="IPR014241">
    <property type="entry name" value="Cyt_c_oxidase_su1_bac"/>
</dbReference>
<dbReference type="NCBIfam" id="TIGR02891">
    <property type="entry name" value="CtaD_CoxA"/>
    <property type="match status" value="1"/>
</dbReference>
<dbReference type="PANTHER" id="PTHR10422">
    <property type="entry name" value="CYTOCHROME C OXIDASE SUBUNIT 1"/>
    <property type="match status" value="1"/>
</dbReference>
<dbReference type="PANTHER" id="PTHR10422:SF18">
    <property type="entry name" value="CYTOCHROME C OXIDASE SUBUNIT 1"/>
    <property type="match status" value="1"/>
</dbReference>
<dbReference type="Pfam" id="PF00115">
    <property type="entry name" value="COX1"/>
    <property type="match status" value="1"/>
</dbReference>
<dbReference type="PRINTS" id="PR01165">
    <property type="entry name" value="CYCOXIDASEI"/>
</dbReference>
<dbReference type="SUPFAM" id="SSF81442">
    <property type="entry name" value="Cytochrome c oxidase subunit I-like"/>
    <property type="match status" value="1"/>
</dbReference>
<dbReference type="PROSITE" id="PS50855">
    <property type="entry name" value="COX1"/>
    <property type="match status" value="1"/>
</dbReference>
<dbReference type="PROSITE" id="PS00077">
    <property type="entry name" value="COX1_CUB"/>
    <property type="match status" value="1"/>
</dbReference>
<gene>
    <name type="primary">ctaD</name>
    <name type="ordered locus">ML1728</name>
</gene>
<name>COX1_MYCLE</name>
<organism>
    <name type="scientific">Mycobacterium leprae (strain TN)</name>
    <dbReference type="NCBI Taxonomy" id="272631"/>
    <lineage>
        <taxon>Bacteria</taxon>
        <taxon>Bacillati</taxon>
        <taxon>Actinomycetota</taxon>
        <taxon>Actinomycetes</taxon>
        <taxon>Mycobacteriales</taxon>
        <taxon>Mycobacteriaceae</taxon>
        <taxon>Mycobacterium</taxon>
    </lineage>
</organism>
<accession>Q9CBQ5</accession>